<evidence type="ECO:0000255" key="1">
    <source>
        <dbReference type="HAMAP-Rule" id="MF_00405"/>
    </source>
</evidence>
<comment type="function">
    <text evidence="1">Necessary for the introduction of cis unsaturation into fatty acids. Catalyzes the dehydration of (3R)-3-hydroxydecanoyl-ACP to E-(2)-decenoyl-ACP and then its isomerization to Z-(3)-decenoyl-ACP. Can catalyze the dehydratase reaction for beta-hydroxyacyl-ACPs with saturated chain lengths up to 16:0, being most active on intermediate chain length.</text>
</comment>
<comment type="catalytic activity">
    <reaction evidence="1">
        <text>a (3R)-hydroxyacyl-[ACP] = a (2E)-enoyl-[ACP] + H2O</text>
        <dbReference type="Rhea" id="RHEA:13097"/>
        <dbReference type="Rhea" id="RHEA-COMP:9925"/>
        <dbReference type="Rhea" id="RHEA-COMP:9945"/>
        <dbReference type="ChEBI" id="CHEBI:15377"/>
        <dbReference type="ChEBI" id="CHEBI:78784"/>
        <dbReference type="ChEBI" id="CHEBI:78827"/>
        <dbReference type="EC" id="4.2.1.59"/>
    </reaction>
</comment>
<comment type="catalytic activity">
    <reaction evidence="1">
        <text>(3R)-hydroxydecanoyl-[ACP] = (2E)-decenoyl-[ACP] + H2O</text>
        <dbReference type="Rhea" id="RHEA:41860"/>
        <dbReference type="Rhea" id="RHEA-COMP:9638"/>
        <dbReference type="Rhea" id="RHEA-COMP:9639"/>
        <dbReference type="ChEBI" id="CHEBI:15377"/>
        <dbReference type="ChEBI" id="CHEBI:78466"/>
        <dbReference type="ChEBI" id="CHEBI:78467"/>
    </reaction>
</comment>
<comment type="catalytic activity">
    <reaction evidence="1">
        <text>(2E)-decenoyl-[ACP] = (3Z)-decenoyl-[ACP]</text>
        <dbReference type="Rhea" id="RHEA:23568"/>
        <dbReference type="Rhea" id="RHEA-COMP:9639"/>
        <dbReference type="Rhea" id="RHEA-COMP:9927"/>
        <dbReference type="ChEBI" id="CHEBI:78467"/>
        <dbReference type="ChEBI" id="CHEBI:78798"/>
        <dbReference type="EC" id="5.3.3.14"/>
    </reaction>
</comment>
<comment type="pathway">
    <text evidence="1">Lipid metabolism; fatty acid biosynthesis.</text>
</comment>
<comment type="subunit">
    <text evidence="1">Homodimer.</text>
</comment>
<comment type="subcellular location">
    <subcellularLocation>
        <location evidence="1">Cytoplasm</location>
    </subcellularLocation>
</comment>
<comment type="similarity">
    <text evidence="1">Belongs to the thioester dehydratase family. FabA subfamily.</text>
</comment>
<accession>Q65TA9</accession>
<keyword id="KW-0963">Cytoplasm</keyword>
<keyword id="KW-0275">Fatty acid biosynthesis</keyword>
<keyword id="KW-0276">Fatty acid metabolism</keyword>
<keyword id="KW-0413">Isomerase</keyword>
<keyword id="KW-0444">Lipid biosynthesis</keyword>
<keyword id="KW-0443">Lipid metabolism</keyword>
<keyword id="KW-0456">Lyase</keyword>
<name>FABA_MANSM</name>
<sequence length="177" mass="19485">MTDSCTLNKKSSYTYEDLLASSRGELFGPKGPQLPAPTMLMMDRVIEMNETGGNYGKGYVEAELDIKPDLFFFGCHFIGDPVMPGCLGLDAMWQLVGFYLGWIGGEGKGRALGVGEVKFTGQILPTAKKVIYRIHLKRVINRKLVMGLADGEVEVDGRVIYTATDLKVGLFQDMSTF</sequence>
<proteinExistence type="inferred from homology"/>
<reference key="1">
    <citation type="journal article" date="2004" name="Nat. Biotechnol.">
        <title>The genome sequence of the capnophilic rumen bacterium Mannheimia succiniciproducens.</title>
        <authorList>
            <person name="Hong S.H."/>
            <person name="Kim J.S."/>
            <person name="Lee S.Y."/>
            <person name="In Y.H."/>
            <person name="Choi S.S."/>
            <person name="Rih J.-K."/>
            <person name="Kim C.H."/>
            <person name="Jeong H."/>
            <person name="Hur C.G."/>
            <person name="Kim J.J."/>
        </authorList>
    </citation>
    <scope>NUCLEOTIDE SEQUENCE [LARGE SCALE GENOMIC DNA]</scope>
    <source>
        <strain>KCTC 0769BP / MBEL55E</strain>
    </source>
</reference>
<feature type="chain" id="PRO_0000091601" description="3-hydroxydecanoyl-[acyl-carrier-protein] dehydratase">
    <location>
        <begin position="1"/>
        <end position="177"/>
    </location>
</feature>
<feature type="active site" evidence="1">
    <location>
        <position position="76"/>
    </location>
</feature>
<dbReference type="EC" id="4.2.1.59" evidence="1"/>
<dbReference type="EC" id="5.3.3.14" evidence="1"/>
<dbReference type="EMBL" id="AE016827">
    <property type="protein sequence ID" value="AAU37801.1"/>
    <property type="molecule type" value="Genomic_DNA"/>
</dbReference>
<dbReference type="RefSeq" id="WP_011200368.1">
    <property type="nucleotide sequence ID" value="NC_006300.1"/>
</dbReference>
<dbReference type="SMR" id="Q65TA9"/>
<dbReference type="STRING" id="221988.MS1194"/>
<dbReference type="KEGG" id="msu:MS1194"/>
<dbReference type="eggNOG" id="COG0764">
    <property type="taxonomic scope" value="Bacteria"/>
</dbReference>
<dbReference type="HOGENOM" id="CLU_097925_0_0_6"/>
<dbReference type="OrthoDB" id="9786735at2"/>
<dbReference type="UniPathway" id="UPA00094"/>
<dbReference type="Proteomes" id="UP000000607">
    <property type="component" value="Chromosome"/>
</dbReference>
<dbReference type="GO" id="GO:0005737">
    <property type="term" value="C:cytoplasm"/>
    <property type="evidence" value="ECO:0007669"/>
    <property type="project" value="UniProtKB-SubCell"/>
</dbReference>
<dbReference type="GO" id="GO:0019171">
    <property type="term" value="F:(3R)-hydroxyacyl-[acyl-carrier-protein] dehydratase activity"/>
    <property type="evidence" value="ECO:0007669"/>
    <property type="project" value="UniProtKB-UniRule"/>
</dbReference>
<dbReference type="GO" id="GO:0034017">
    <property type="term" value="F:trans-2-decenoyl-acyl-carrier-protein isomerase activity"/>
    <property type="evidence" value="ECO:0007669"/>
    <property type="project" value="UniProtKB-UniRule"/>
</dbReference>
<dbReference type="GO" id="GO:0006636">
    <property type="term" value="P:unsaturated fatty acid biosynthetic process"/>
    <property type="evidence" value="ECO:0007669"/>
    <property type="project" value="UniProtKB-UniRule"/>
</dbReference>
<dbReference type="CDD" id="cd01287">
    <property type="entry name" value="FabA"/>
    <property type="match status" value="1"/>
</dbReference>
<dbReference type="FunFam" id="3.10.129.10:FF:000003">
    <property type="entry name" value="3-hydroxydecanoyl-[acyl-carrier-protein] dehydratase"/>
    <property type="match status" value="1"/>
</dbReference>
<dbReference type="Gene3D" id="3.10.129.10">
    <property type="entry name" value="Hotdog Thioesterase"/>
    <property type="match status" value="1"/>
</dbReference>
<dbReference type="HAMAP" id="MF_00405">
    <property type="entry name" value="FabA"/>
    <property type="match status" value="1"/>
</dbReference>
<dbReference type="InterPro" id="IPR010083">
    <property type="entry name" value="FabA"/>
</dbReference>
<dbReference type="InterPro" id="IPR013114">
    <property type="entry name" value="FabA_FabZ"/>
</dbReference>
<dbReference type="InterPro" id="IPR029069">
    <property type="entry name" value="HotDog_dom_sf"/>
</dbReference>
<dbReference type="NCBIfam" id="TIGR01749">
    <property type="entry name" value="fabA"/>
    <property type="match status" value="1"/>
</dbReference>
<dbReference type="NCBIfam" id="NF003509">
    <property type="entry name" value="PRK05174.1"/>
    <property type="match status" value="1"/>
</dbReference>
<dbReference type="PANTHER" id="PTHR30272">
    <property type="entry name" value="3-HYDROXYACYL-[ACYL-CARRIER-PROTEIN] DEHYDRATASE"/>
    <property type="match status" value="1"/>
</dbReference>
<dbReference type="PANTHER" id="PTHR30272:SF8">
    <property type="entry name" value="3-HYDROXYDECANOYL-[ACYL-CARRIER-PROTEIN] DEHYDRATASE"/>
    <property type="match status" value="1"/>
</dbReference>
<dbReference type="Pfam" id="PF07977">
    <property type="entry name" value="FabA"/>
    <property type="match status" value="1"/>
</dbReference>
<dbReference type="SUPFAM" id="SSF54637">
    <property type="entry name" value="Thioesterase/thiol ester dehydrase-isomerase"/>
    <property type="match status" value="1"/>
</dbReference>
<organism>
    <name type="scientific">Mannheimia succiniciproducens (strain KCTC 0769BP / MBEL55E)</name>
    <dbReference type="NCBI Taxonomy" id="221988"/>
    <lineage>
        <taxon>Bacteria</taxon>
        <taxon>Pseudomonadati</taxon>
        <taxon>Pseudomonadota</taxon>
        <taxon>Gammaproteobacteria</taxon>
        <taxon>Pasteurellales</taxon>
        <taxon>Pasteurellaceae</taxon>
        <taxon>Basfia</taxon>
    </lineage>
</organism>
<protein>
    <recommendedName>
        <fullName evidence="1">3-hydroxydecanoyl-[acyl-carrier-protein] dehydratase</fullName>
        <ecNumber evidence="1">4.2.1.59</ecNumber>
    </recommendedName>
    <alternativeName>
        <fullName evidence="1">3-hydroxyacyl-[acyl-carrier-protein] dehydratase FabA</fullName>
    </alternativeName>
    <alternativeName>
        <fullName evidence="1">Beta-hydroxydecanoyl thioester dehydrase</fullName>
    </alternativeName>
    <alternativeName>
        <fullName evidence="1">Trans-2-decenoyl-[acyl-carrier-protein] isomerase</fullName>
        <ecNumber evidence="1">5.3.3.14</ecNumber>
    </alternativeName>
</protein>
<gene>
    <name evidence="1" type="primary">fabA</name>
    <name type="ordered locus">MS1194</name>
</gene>